<reference key="1">
    <citation type="journal article" date="1997" name="Biochem. Soc. Trans.">
        <title>Characterisation of ZK643-3: a putative 7TM neuropeptide receptor.</title>
        <authorList>
            <person name="Coates D."/>
            <person name="Briggs D.A."/>
            <person name="MacGregor D."/>
            <person name="Lynch A.S."/>
            <person name="Kolakowski L.F. Jr."/>
            <person name="Hope I.A."/>
            <person name="Isaac R.E."/>
        </authorList>
    </citation>
    <scope>NUCLEOTIDE SEQUENCE [GENOMIC DNA]</scope>
    <scope>TISSUE SPECIFICITY</scope>
</reference>
<reference key="2">
    <citation type="journal article" date="1992" name="Nature">
        <title>The C. elegans genome sequencing project: a beginning.</title>
        <authorList>
            <person name="Sulston J."/>
            <person name="Du Z."/>
            <person name="Thomas K."/>
            <person name="Wilson R."/>
            <person name="Hillier L."/>
            <person name="Staden R."/>
            <person name="Halloran N."/>
            <person name="Green P."/>
            <person name="Thierry-Mieg J."/>
            <person name="Qiu L."/>
            <person name="Dear S."/>
            <person name="Coulson A."/>
            <person name="Craxton M."/>
            <person name="Durbin R."/>
            <person name="Berks M."/>
            <person name="Metzstein M."/>
            <person name="Hawkins T."/>
            <person name="Ainscough R."/>
            <person name="Waterston R."/>
        </authorList>
    </citation>
    <scope>NUCLEOTIDE SEQUENCE [LARGE SCALE GENOMIC DNA]</scope>
    <source>
        <strain>Bristol N2</strain>
    </source>
</reference>
<reference key="3">
    <citation type="journal article" date="1998" name="Science">
        <title>Genome sequence of the nematode C. elegans: a platform for investigating biology.</title>
        <authorList>
            <consortium name="The C. elegans sequencing consortium"/>
        </authorList>
    </citation>
    <scope>NUCLEOTIDE SEQUENCE [LARGE SCALE GENOMIC DNA]</scope>
    <source>
        <strain>Bristol N2</strain>
    </source>
</reference>
<reference key="4">
    <citation type="journal article" date="2007" name="Mol. Cell. Proteomics">
        <title>Proteomics reveals N-linked glycoprotein diversity in Caenorhabditis elegans and suggests an atypical translocation mechanism for integral membrane proteins.</title>
        <authorList>
            <person name="Kaji H."/>
            <person name="Kamiie J."/>
            <person name="Kawakami H."/>
            <person name="Kido K."/>
            <person name="Yamauchi Y."/>
            <person name="Shinkawa T."/>
            <person name="Taoka M."/>
            <person name="Takahashi N."/>
            <person name="Isobe T."/>
        </authorList>
    </citation>
    <scope>GLYCOSYLATION [LARGE SCALE ANALYSIS] AT ASN-95</scope>
    <scope>IDENTIFICATION BY MASS SPECTROMETRY</scope>
    <source>
        <strain>Bristol N2</strain>
    </source>
</reference>
<keyword id="KW-1003">Cell membrane</keyword>
<keyword id="KW-0217">Developmental protein</keyword>
<keyword id="KW-0297">G-protein coupled receptor</keyword>
<keyword id="KW-0325">Glycoprotein</keyword>
<keyword id="KW-0472">Membrane</keyword>
<keyword id="KW-0675">Receptor</keyword>
<keyword id="KW-1185">Reference proteome</keyword>
<keyword id="KW-0807">Transducer</keyword>
<keyword id="KW-0812">Transmembrane</keyword>
<keyword id="KW-1133">Transmembrane helix</keyword>
<organism>
    <name type="scientific">Caenorhabditis elegans</name>
    <dbReference type="NCBI Taxonomy" id="6239"/>
    <lineage>
        <taxon>Eukaryota</taxon>
        <taxon>Metazoa</taxon>
        <taxon>Ecdysozoa</taxon>
        <taxon>Nematoda</taxon>
        <taxon>Chromadorea</taxon>
        <taxon>Rhabditida</taxon>
        <taxon>Rhabditina</taxon>
        <taxon>Rhabditomorpha</taxon>
        <taxon>Rhabditoidea</taxon>
        <taxon>Rhabditidae</taxon>
        <taxon>Peloderinae</taxon>
        <taxon>Caenorhabditis</taxon>
    </lineage>
</organism>
<accession>P30650</accession>
<accession>P30649</accession>
<protein>
    <recommendedName>
        <fullName evidence="4">G-protein coupled receptor seb-2</fullName>
    </recommendedName>
</protein>
<feature type="chain" id="PRO_0000070333" description="G-protein coupled receptor seb-2">
    <location>
        <begin position="1"/>
        <end position="480"/>
    </location>
</feature>
<feature type="topological domain" description="Extracellular" evidence="1">
    <location>
        <begin position="1"/>
        <end position="222"/>
    </location>
</feature>
<feature type="transmembrane region" description="Helical" evidence="1">
    <location>
        <begin position="223"/>
        <end position="243"/>
    </location>
</feature>
<feature type="topological domain" description="Cytoplasmic" evidence="1">
    <location>
        <begin position="244"/>
        <end position="261"/>
    </location>
</feature>
<feature type="transmembrane region" description="Helical" evidence="1">
    <location>
        <begin position="262"/>
        <end position="282"/>
    </location>
</feature>
<feature type="topological domain" description="Extracellular" evidence="1">
    <location>
        <begin position="283"/>
        <end position="305"/>
    </location>
</feature>
<feature type="transmembrane region" description="Helical" evidence="1">
    <location>
        <begin position="306"/>
        <end position="328"/>
    </location>
</feature>
<feature type="topological domain" description="Cytoplasmic" evidence="1">
    <location>
        <begin position="329"/>
        <end position="343"/>
    </location>
</feature>
<feature type="transmembrane region" description="Helical" evidence="1">
    <location>
        <begin position="344"/>
        <end position="364"/>
    </location>
</feature>
<feature type="topological domain" description="Extracellular" evidence="1">
    <location>
        <begin position="365"/>
        <end position="386"/>
    </location>
</feature>
<feature type="transmembrane region" description="Helical" evidence="1">
    <location>
        <begin position="387"/>
        <end position="407"/>
    </location>
</feature>
<feature type="topological domain" description="Cytoplasmic" evidence="1">
    <location>
        <begin position="408"/>
        <end position="423"/>
    </location>
</feature>
<feature type="transmembrane region" description="Helical" evidence="1">
    <location>
        <begin position="424"/>
        <end position="444"/>
    </location>
</feature>
<feature type="topological domain" description="Extracellular" evidence="1">
    <location>
        <begin position="445"/>
        <end position="480"/>
    </location>
</feature>
<feature type="glycosylation site" description="N-linked (GlcNAc...) asparagine" evidence="2">
    <location>
        <position position="95"/>
    </location>
</feature>
<comment type="function">
    <text>Not known. Putative receptor.</text>
</comment>
<comment type="subcellular location">
    <subcellularLocation>
        <location evidence="4">Cell membrane</location>
        <topology evidence="4">Multi-pass membrane protein</topology>
    </subcellularLocation>
</comment>
<comment type="tissue specificity">
    <text evidence="3">Present in the head body-wall muscles from the L1 larval stage through to adulthood. Also expressed between L4 and the adult molt in vulval vm1 muscle cells. These cells play a role in opening the vulva during egg laying.</text>
</comment>
<comment type="similarity">
    <text evidence="4">Belongs to the G-protein coupled receptor 2 family.</text>
</comment>
<name>SEB2_CAEEL</name>
<evidence type="ECO:0000255" key="1"/>
<evidence type="ECO:0000269" key="2">
    <source>
    </source>
</evidence>
<evidence type="ECO:0000269" key="3">
    <source>
    </source>
</evidence>
<evidence type="ECO:0000305" key="4"/>
<evidence type="ECO:0000312" key="5">
    <source>
        <dbReference type="WormBase" id="ZK643.3a"/>
    </source>
</evidence>
<dbReference type="EMBL" id="Z11126">
    <property type="protein sequence ID" value="CAA77471.2"/>
    <property type="molecule type" value="Genomic_DNA"/>
</dbReference>
<dbReference type="PIR" id="C88543">
    <property type="entry name" value="C88543"/>
</dbReference>
<dbReference type="PIR" id="S23241">
    <property type="entry name" value="S23241"/>
</dbReference>
<dbReference type="PIR" id="S23242">
    <property type="entry name" value="S23242"/>
</dbReference>
<dbReference type="RefSeq" id="NP_498978.2">
    <property type="nucleotide sequence ID" value="NM_066577.5"/>
</dbReference>
<dbReference type="SMR" id="P30650"/>
<dbReference type="BioGRID" id="55912">
    <property type="interactions" value="1"/>
</dbReference>
<dbReference type="FunCoup" id="P30650">
    <property type="interactions" value="122"/>
</dbReference>
<dbReference type="STRING" id="6239.ZK643.3b.1"/>
<dbReference type="GlyCosmos" id="P30650">
    <property type="glycosylation" value="1 site, No reported glycans"/>
</dbReference>
<dbReference type="iPTMnet" id="P30650"/>
<dbReference type="PaxDb" id="6239-ZK643.3b"/>
<dbReference type="EnsemblMetazoa" id="ZK643.3a.1">
    <property type="protein sequence ID" value="ZK643.3a.1"/>
    <property type="gene ID" value="WBGene00014035"/>
</dbReference>
<dbReference type="UCSC" id="ZK643.3b">
    <property type="organism name" value="c. elegans"/>
</dbReference>
<dbReference type="WormBase" id="ZK643.3a">
    <property type="protein sequence ID" value="CE33750"/>
    <property type="gene ID" value="WBGene00014035"/>
    <property type="gene designation" value="seb-2"/>
</dbReference>
<dbReference type="eggNOG" id="KOG4564">
    <property type="taxonomic scope" value="Eukaryota"/>
</dbReference>
<dbReference type="GeneTree" id="ENSGT00940000167994"/>
<dbReference type="InParanoid" id="P30650"/>
<dbReference type="OrthoDB" id="16753at2759"/>
<dbReference type="Reactome" id="R-CEL-419812">
    <property type="pathway name" value="Calcitonin-like ligand receptors"/>
</dbReference>
<dbReference type="PRO" id="PR:P30650"/>
<dbReference type="Proteomes" id="UP000001940">
    <property type="component" value="Chromosome III"/>
</dbReference>
<dbReference type="Bgee" id="WBGene00014035">
    <property type="expression patterns" value="Expressed in adult organism and 2 other cell types or tissues"/>
</dbReference>
<dbReference type="ExpressionAtlas" id="P30650">
    <property type="expression patterns" value="baseline and differential"/>
</dbReference>
<dbReference type="GO" id="GO:0005886">
    <property type="term" value="C:plasma membrane"/>
    <property type="evidence" value="ECO:0000318"/>
    <property type="project" value="GO_Central"/>
</dbReference>
<dbReference type="GO" id="GO:0008528">
    <property type="term" value="F:G protein-coupled peptide receptor activity"/>
    <property type="evidence" value="ECO:0000318"/>
    <property type="project" value="GO_Central"/>
</dbReference>
<dbReference type="GO" id="GO:0007188">
    <property type="term" value="P:adenylate cyclase-modulating G protein-coupled receptor signaling pathway"/>
    <property type="evidence" value="ECO:0000318"/>
    <property type="project" value="GO_Central"/>
</dbReference>
<dbReference type="GO" id="GO:0007166">
    <property type="term" value="P:cell surface receptor signaling pathway"/>
    <property type="evidence" value="ECO:0007669"/>
    <property type="project" value="InterPro"/>
</dbReference>
<dbReference type="Gene3D" id="4.10.1240.10">
    <property type="entry name" value="GPCR, family 2, extracellular hormone receptor domain"/>
    <property type="match status" value="1"/>
</dbReference>
<dbReference type="Gene3D" id="1.20.1070.10">
    <property type="entry name" value="Rhodopsin 7-helix transmembrane proteins"/>
    <property type="match status" value="1"/>
</dbReference>
<dbReference type="InterPro" id="IPR050332">
    <property type="entry name" value="GPCR_2"/>
</dbReference>
<dbReference type="InterPro" id="IPR017981">
    <property type="entry name" value="GPCR_2-like_7TM"/>
</dbReference>
<dbReference type="InterPro" id="IPR036445">
    <property type="entry name" value="GPCR_2_extracell_dom_sf"/>
</dbReference>
<dbReference type="InterPro" id="IPR001879">
    <property type="entry name" value="GPCR_2_extracellular_dom"/>
</dbReference>
<dbReference type="InterPro" id="IPR000832">
    <property type="entry name" value="GPCR_2_secretin-like"/>
</dbReference>
<dbReference type="InterPro" id="IPR017983">
    <property type="entry name" value="GPCR_2_secretin-like_CS"/>
</dbReference>
<dbReference type="PANTHER" id="PTHR45620:SF42">
    <property type="entry name" value="G-PROTEIN COUPLED RECEPTOR SEB-2"/>
    <property type="match status" value="1"/>
</dbReference>
<dbReference type="PANTHER" id="PTHR45620">
    <property type="entry name" value="PDF RECEPTOR-LIKE PROTEIN-RELATED"/>
    <property type="match status" value="1"/>
</dbReference>
<dbReference type="Pfam" id="PF00002">
    <property type="entry name" value="7tm_2"/>
    <property type="match status" value="1"/>
</dbReference>
<dbReference type="Pfam" id="PF02793">
    <property type="entry name" value="HRM"/>
    <property type="match status" value="1"/>
</dbReference>
<dbReference type="PRINTS" id="PR00249">
    <property type="entry name" value="GPCRSECRETIN"/>
</dbReference>
<dbReference type="SMART" id="SM00008">
    <property type="entry name" value="HormR"/>
    <property type="match status" value="1"/>
</dbReference>
<dbReference type="SUPFAM" id="SSF111418">
    <property type="entry name" value="Hormone receptor domain"/>
    <property type="match status" value="1"/>
</dbReference>
<dbReference type="PROSITE" id="PS00649">
    <property type="entry name" value="G_PROTEIN_RECEP_F2_1"/>
    <property type="match status" value="1"/>
</dbReference>
<dbReference type="PROSITE" id="PS50227">
    <property type="entry name" value="G_PROTEIN_RECEP_F2_3"/>
    <property type="match status" value="1"/>
</dbReference>
<dbReference type="PROSITE" id="PS50261">
    <property type="entry name" value="G_PROTEIN_RECEP_F2_4"/>
    <property type="match status" value="1"/>
</dbReference>
<gene>
    <name evidence="5" type="primary">seb-2</name>
    <name evidence="5" type="ORF">ZK643.3</name>
</gene>
<sequence length="480" mass="54808">MNPSISTAGAVVDDFQMSCRFSNFGDHAPESFDSLSCGACFYFIFMLVEHYKDRYVASLCEDTFGVLVCPVDVSDKICNCYNREYVYNIPEFALNSSRIKPLNHLRLDPPLPFQFDLIVKDCCSAARYCCRNTLVKYHHRVDDSPCPPTWDGWNCFDSATPGVVFKQCPNYIYGGSNIKTDYDRLSQKVCRSNGWATPEVNAAAREHTDYTGCMSNGDVEARILAGLLTYSASVIFLIPAVFLLTLLRPIRCQPMFILHRHLLISCLLYGAFYLITVSLFVVNDAPLSSQVFQNHLFCRLLFSIQLRYLRLTNFTWMLAEAVYLWRLLHTAQHSEGETLRSYKVICWGVPGVITVVYIFVRSLNDDVGMCWIENSTVAWIEWMIITPSLLAMGVNLLLLGLIVYILVKKLRCDPHLERIQYRKAVRGALMLIPVFGVQQLLTIYRFRNVCLIYRLLHKSFCRRMCSEILVITSGEAGSRS</sequence>
<proteinExistence type="evidence at protein level"/>